<evidence type="ECO:0000255" key="1">
    <source>
        <dbReference type="HAMAP-Rule" id="MF_00050"/>
    </source>
</evidence>
<protein>
    <recommendedName>
        <fullName evidence="1">Elongation factor Ts</fullName>
        <shortName evidence="1">EF-Ts</shortName>
    </recommendedName>
</protein>
<reference key="1">
    <citation type="journal article" date="2007" name="PLoS Genet.">
        <title>Patterns and implications of gene gain and loss in the evolution of Prochlorococcus.</title>
        <authorList>
            <person name="Kettler G.C."/>
            <person name="Martiny A.C."/>
            <person name="Huang K."/>
            <person name="Zucker J."/>
            <person name="Coleman M.L."/>
            <person name="Rodrigue S."/>
            <person name="Chen F."/>
            <person name="Lapidus A."/>
            <person name="Ferriera S."/>
            <person name="Johnson J."/>
            <person name="Steglich C."/>
            <person name="Church G.M."/>
            <person name="Richardson P."/>
            <person name="Chisholm S.W."/>
        </authorList>
    </citation>
    <scope>NUCLEOTIDE SEQUENCE [LARGE SCALE GENOMIC DNA]</scope>
    <source>
        <strain>NATL1A</strain>
    </source>
</reference>
<feature type="chain" id="PRO_1000006146" description="Elongation factor Ts">
    <location>
        <begin position="1"/>
        <end position="218"/>
    </location>
</feature>
<feature type="region of interest" description="Involved in Mg(2+) ion dislocation from EF-Tu" evidence="1">
    <location>
        <begin position="82"/>
        <end position="85"/>
    </location>
</feature>
<dbReference type="EMBL" id="CP000553">
    <property type="protein sequence ID" value="ABM75348.1"/>
    <property type="molecule type" value="Genomic_DNA"/>
</dbReference>
<dbReference type="RefSeq" id="WP_011823498.1">
    <property type="nucleotide sequence ID" value="NC_008819.1"/>
</dbReference>
<dbReference type="SMR" id="A2C1I8"/>
<dbReference type="KEGG" id="pme:NATL1_07901"/>
<dbReference type="eggNOG" id="COG0264">
    <property type="taxonomic scope" value="Bacteria"/>
</dbReference>
<dbReference type="HOGENOM" id="CLU_047155_1_1_3"/>
<dbReference type="Proteomes" id="UP000002592">
    <property type="component" value="Chromosome"/>
</dbReference>
<dbReference type="GO" id="GO:0005737">
    <property type="term" value="C:cytoplasm"/>
    <property type="evidence" value="ECO:0007669"/>
    <property type="project" value="UniProtKB-SubCell"/>
</dbReference>
<dbReference type="GO" id="GO:0003746">
    <property type="term" value="F:translation elongation factor activity"/>
    <property type="evidence" value="ECO:0007669"/>
    <property type="project" value="UniProtKB-UniRule"/>
</dbReference>
<dbReference type="CDD" id="cd14275">
    <property type="entry name" value="UBA_EF-Ts"/>
    <property type="match status" value="1"/>
</dbReference>
<dbReference type="FunFam" id="1.10.286.20:FF:000001">
    <property type="entry name" value="Elongation factor Ts"/>
    <property type="match status" value="1"/>
</dbReference>
<dbReference type="FunFam" id="1.10.8.10:FF:000001">
    <property type="entry name" value="Elongation factor Ts"/>
    <property type="match status" value="1"/>
</dbReference>
<dbReference type="Gene3D" id="1.10.286.20">
    <property type="match status" value="1"/>
</dbReference>
<dbReference type="Gene3D" id="1.10.8.10">
    <property type="entry name" value="DNA helicase RuvA subunit, C-terminal domain"/>
    <property type="match status" value="1"/>
</dbReference>
<dbReference type="Gene3D" id="3.30.479.20">
    <property type="entry name" value="Elongation factor Ts, dimerisation domain"/>
    <property type="match status" value="1"/>
</dbReference>
<dbReference type="HAMAP" id="MF_00050">
    <property type="entry name" value="EF_Ts"/>
    <property type="match status" value="1"/>
</dbReference>
<dbReference type="InterPro" id="IPR036402">
    <property type="entry name" value="EF-Ts_dimer_sf"/>
</dbReference>
<dbReference type="InterPro" id="IPR001816">
    <property type="entry name" value="Transl_elong_EFTs/EF1B"/>
</dbReference>
<dbReference type="InterPro" id="IPR014039">
    <property type="entry name" value="Transl_elong_EFTs/EF1B_dimer"/>
</dbReference>
<dbReference type="InterPro" id="IPR018101">
    <property type="entry name" value="Transl_elong_Ts_CS"/>
</dbReference>
<dbReference type="InterPro" id="IPR009060">
    <property type="entry name" value="UBA-like_sf"/>
</dbReference>
<dbReference type="NCBIfam" id="TIGR00116">
    <property type="entry name" value="tsf"/>
    <property type="match status" value="1"/>
</dbReference>
<dbReference type="PANTHER" id="PTHR11741">
    <property type="entry name" value="ELONGATION FACTOR TS"/>
    <property type="match status" value="1"/>
</dbReference>
<dbReference type="PANTHER" id="PTHR11741:SF10">
    <property type="entry name" value="POLYPROTEIN OF EF-TS, CHLOROPLASTIC"/>
    <property type="match status" value="1"/>
</dbReference>
<dbReference type="Pfam" id="PF00889">
    <property type="entry name" value="EF_TS"/>
    <property type="match status" value="1"/>
</dbReference>
<dbReference type="SUPFAM" id="SSF54713">
    <property type="entry name" value="Elongation factor Ts (EF-Ts), dimerisation domain"/>
    <property type="match status" value="1"/>
</dbReference>
<dbReference type="SUPFAM" id="SSF46934">
    <property type="entry name" value="UBA-like"/>
    <property type="match status" value="1"/>
</dbReference>
<dbReference type="PROSITE" id="PS01126">
    <property type="entry name" value="EF_TS_1"/>
    <property type="match status" value="1"/>
</dbReference>
<dbReference type="PROSITE" id="PS01127">
    <property type="entry name" value="EF_TS_2"/>
    <property type="match status" value="1"/>
</dbReference>
<gene>
    <name evidence="1" type="primary">tsf</name>
    <name type="ordered locus">NATL1_07901</name>
</gene>
<accession>A2C1I8</accession>
<comment type="function">
    <text evidence="1">Associates with the EF-Tu.GDP complex and induces the exchange of GDP to GTP. It remains bound to the aminoacyl-tRNA.EF-Tu.GTP complex up to the GTP hydrolysis stage on the ribosome.</text>
</comment>
<comment type="subcellular location">
    <subcellularLocation>
        <location evidence="1">Cytoplasm</location>
    </subcellularLocation>
</comment>
<comment type="similarity">
    <text evidence="1">Belongs to the EF-Ts family.</text>
</comment>
<organism>
    <name type="scientific">Prochlorococcus marinus (strain NATL1A)</name>
    <dbReference type="NCBI Taxonomy" id="167555"/>
    <lineage>
        <taxon>Bacteria</taxon>
        <taxon>Bacillati</taxon>
        <taxon>Cyanobacteriota</taxon>
        <taxon>Cyanophyceae</taxon>
        <taxon>Synechococcales</taxon>
        <taxon>Prochlorococcaceae</taxon>
        <taxon>Prochlorococcus</taxon>
    </lineage>
</organism>
<keyword id="KW-0963">Cytoplasm</keyword>
<keyword id="KW-0251">Elongation factor</keyword>
<keyword id="KW-0648">Protein biosynthesis</keyword>
<proteinExistence type="inferred from homology"/>
<sequence>MAEITAKLVKELRDKTSAGMMDCKKALIENKGDMDKSIEWLRQKGIASAEKKSGRVAAEGAVGSYIHTGSRVGVLLELNCETDFVARGDLFQGLLRDLSMQVAACPSVEYVSVDQIPESIANKEKEIEMGRDDLSGKPDQIKAKIVEGRIGKRLKEMALLEQPFIKDSSINVEELVKQVAGKIGENIRVRRFTRYILGEGIEVQGPDFAEEVASMTLG</sequence>
<name>EFTS_PROM1</name>